<comment type="function">
    <text evidence="1">Tyrosine-protein kinase that acts as a cell-surface receptor for fibroblast growth factors and plays an essential role in the regulation of embryonic development, cell proliferation, differentiation and migration. Required for normal mesoderm patterning and normal skeletogenesis. Phosphorylates PLCG1, FRS2, GAB1 and SHB. Ligand binding leads to the activation of several signaling cascades. Activation of PLCG1 leads to the production of the cellular signaling molecules diacylglycerol and inositol-1,4,5-trisphosphate. Phosphorylation of FRS2 triggers recruitment of GRB2, GAB1, PIK3R1 and SOS1, and mediates activation of RAS, MAPK1/ERK2, MAPK3/ERK1 and the MAP kinase signaling pathway, as well as of the AKT1 signaling pathway. Promotes phosphorylation of SHC1, STAT1 and PTPN11/SHP2. In the nucleus, enhances RPS6KA1 and CREB1 activity and contributes to the regulation of transcription. FGFR1 signaling is down-regulated by ubiquitination, internalization and degradation (By similarity).</text>
</comment>
<comment type="catalytic activity">
    <reaction evidence="5">
        <text>L-tyrosyl-[protein] + ATP = O-phospho-L-tyrosyl-[protein] + ADP + H(+)</text>
        <dbReference type="Rhea" id="RHEA:10596"/>
        <dbReference type="Rhea" id="RHEA-COMP:10136"/>
        <dbReference type="Rhea" id="RHEA-COMP:20101"/>
        <dbReference type="ChEBI" id="CHEBI:15378"/>
        <dbReference type="ChEBI" id="CHEBI:30616"/>
        <dbReference type="ChEBI" id="CHEBI:46858"/>
        <dbReference type="ChEBI" id="CHEBI:61978"/>
        <dbReference type="ChEBI" id="CHEBI:456216"/>
        <dbReference type="EC" id="2.7.10.1"/>
    </reaction>
</comment>
<comment type="activity regulation">
    <text evidence="1">Present in an inactive conformation in the absence of bound ligand. Ligand binding leads to dimerization and activation by sequential autophosphorylation on tyrosine residues (By similarity).</text>
</comment>
<comment type="subunit">
    <text evidence="1 8">Monomer. Homodimer after ligand binding (By similarity). Interacts with cnpy1.</text>
</comment>
<comment type="subcellular location">
    <subcellularLocation>
        <location evidence="1">Cell membrane</location>
        <topology evidence="1">Single-pass type I membrane protein</topology>
    </subcellularLocation>
    <subcellularLocation>
        <location evidence="1">Nucleus</location>
    </subcellularLocation>
    <subcellularLocation>
        <location evidence="1">Cytoplasm</location>
        <location evidence="1">Cytosol</location>
    </subcellularLocation>
    <subcellularLocation>
        <location evidence="1">Cytoplasmic vesicle</location>
    </subcellularLocation>
    <text evidence="1">After ligand binding, both receptor and ligand are rapidly internalized. Can translocate to the nucleus after internalization, or by translocation from the endoplasmic reticulum or Golgi apparatus to the cytosol, and from there to the nucleus (By similarity).</text>
</comment>
<comment type="alternative products">
    <event type="alternative splicing"/>
    <isoform>
        <id>Q90Z00-1</id>
        <name>1</name>
        <sequence type="displayed"/>
    </isoform>
    <isoform>
        <id>Q90Z00-2</id>
        <name>2</name>
        <sequence type="described" ref="VSP_037677"/>
    </isoform>
    <isoform>
        <id>Q90Z00-3</id>
        <name>3</name>
        <sequence type="described" ref="VSP_037675 VSP_037677"/>
    </isoform>
    <isoform>
        <id>Q90Z00-4</id>
        <name>4</name>
        <sequence type="described" ref="VSP_037674"/>
    </isoform>
    <isoform>
        <id>Q90Z00-5</id>
        <name>5</name>
        <sequence type="described" ref="VSP_037676 VSP_037677"/>
    </isoform>
</comment>
<comment type="tissue specificity">
    <text evidence="7">Initially expressed in adaxial mesoderm with transcripts distinctly localized to the anterior portion of each half-somite. Hereupon, also strongly expressed in the otic vesicles, branchial arches and the brain, especially at the midbrain-hindbrain boundary (MHB).</text>
</comment>
<comment type="domain">
    <text evidence="1">The second and third Ig-like domains directly interact with fibroblast growth factors (FGF) and heparan sulfate proteoglycans. Isoforms lacking the first Ig-like domain have higher affinity for fibroblast growth factors (FGF) and heparan sulfate proteoglycans than isoforms with all three Ig-like domains (By similarity).</text>
</comment>
<comment type="PTM">
    <text evidence="1">Autophosphorylated. Binding of FGF family members together with heparan sulfate proteoglycan or heparin promotes receptor dimerization and autophosphorylation on tyrosine residues. Autophosphorylation occurs in trans between the two FGFR molecules present in the dimer and proceeds in a highly ordered manner. Phosphotyrosine residues provide docking sites for interacting proteins and so are crucial for FGFR1 function and its regulation (By similarity).</text>
</comment>
<comment type="PTM">
    <text evidence="1">Ubiquitinated. FGFR1 is rapidly ubiquitinated after autophosphorylation, leading to internalization and degradation (By similarity).</text>
</comment>
<comment type="PTM">
    <text evidence="1">N-glycosylated in the endoplasmic reticulum. The N-glycan chains undergo further maturation to an Endo H-resistant form in the Golgi apparatus (By similarity).</text>
</comment>
<comment type="similarity">
    <text evidence="4">Belongs to the protein kinase superfamily. Tyr protein kinase family. Fibroblast growth factor receptor subfamily.</text>
</comment>
<comment type="sequence caution" evidence="10">
    <conflict type="erroneous initiation">
        <sequence resource="EMBL-CDS" id="AAI62342"/>
    </conflict>
</comment>
<comment type="sequence caution" evidence="10">
    <conflict type="erroneous initiation">
        <sequence resource="EMBL-CDS" id="AAK64494"/>
    </conflict>
</comment>
<comment type="sequence caution" evidence="10">
    <conflict type="erroneous initiation">
        <sequence resource="EMBL-CDS" id="AAO45658"/>
    </conflict>
</comment>
<comment type="sequence caution" evidence="10">
    <conflict type="erroneous initiation">
        <sequence resource="EMBL-CDS" id="AAO45659"/>
    </conflict>
</comment>
<comment type="sequence caution" evidence="10">
    <conflict type="erroneous initiation">
        <sequence resource="EMBL-CDS" id="AAO45660"/>
    </conflict>
</comment>
<proteinExistence type="evidence at protein level"/>
<gene>
    <name type="primary">fgfr1a</name>
    <name type="synonym">fgfr1</name>
    <name type="ORF">si:ch211-198o12.1</name>
</gene>
<reference key="1">
    <citation type="journal article" date="2004" name="Dev. Genes Evol.">
        <title>Zebrafish fgfr1 is a member of the fgf8 synexpression group and is required for fgf8 signalling at the midbrain-hindbrain boundary.</title>
        <authorList>
            <person name="Scholpp S."/>
            <person name="Groth C."/>
            <person name="Lohs C."/>
            <person name="Lardelli M."/>
            <person name="Brand M."/>
        </authorList>
    </citation>
    <scope>NUCLEOTIDE SEQUENCE [MRNA] (ISOFORMS 1; 2; 3 AND 4)</scope>
    <scope>NUCLEOTIDE SEQUENCE [MRNA] OF 10-378 (ISOFORM 5)</scope>
    <scope>TISSUE SPECIFICITY</scope>
</reference>
<reference key="2">
    <citation type="journal article" date="2013" name="Nature">
        <title>The zebrafish reference genome sequence and its relationship to the human genome.</title>
        <authorList>
            <person name="Howe K."/>
            <person name="Clark M.D."/>
            <person name="Torroja C.F."/>
            <person name="Torrance J."/>
            <person name="Berthelot C."/>
            <person name="Muffato M."/>
            <person name="Collins J.E."/>
            <person name="Humphray S."/>
            <person name="McLaren K."/>
            <person name="Matthews L."/>
            <person name="McLaren S."/>
            <person name="Sealy I."/>
            <person name="Caccamo M."/>
            <person name="Churcher C."/>
            <person name="Scott C."/>
            <person name="Barrett J.C."/>
            <person name="Koch R."/>
            <person name="Rauch G.J."/>
            <person name="White S."/>
            <person name="Chow W."/>
            <person name="Kilian B."/>
            <person name="Quintais L.T."/>
            <person name="Guerra-Assuncao J.A."/>
            <person name="Zhou Y."/>
            <person name="Gu Y."/>
            <person name="Yen J."/>
            <person name="Vogel J.H."/>
            <person name="Eyre T."/>
            <person name="Redmond S."/>
            <person name="Banerjee R."/>
            <person name="Chi J."/>
            <person name="Fu B."/>
            <person name="Langley E."/>
            <person name="Maguire S.F."/>
            <person name="Laird G.K."/>
            <person name="Lloyd D."/>
            <person name="Kenyon E."/>
            <person name="Donaldson S."/>
            <person name="Sehra H."/>
            <person name="Almeida-King J."/>
            <person name="Loveland J."/>
            <person name="Trevanion S."/>
            <person name="Jones M."/>
            <person name="Quail M."/>
            <person name="Willey D."/>
            <person name="Hunt A."/>
            <person name="Burton J."/>
            <person name="Sims S."/>
            <person name="McLay K."/>
            <person name="Plumb B."/>
            <person name="Davis J."/>
            <person name="Clee C."/>
            <person name="Oliver K."/>
            <person name="Clark R."/>
            <person name="Riddle C."/>
            <person name="Elliot D."/>
            <person name="Threadgold G."/>
            <person name="Harden G."/>
            <person name="Ware D."/>
            <person name="Begum S."/>
            <person name="Mortimore B."/>
            <person name="Kerry G."/>
            <person name="Heath P."/>
            <person name="Phillimore B."/>
            <person name="Tracey A."/>
            <person name="Corby N."/>
            <person name="Dunn M."/>
            <person name="Johnson C."/>
            <person name="Wood J."/>
            <person name="Clark S."/>
            <person name="Pelan S."/>
            <person name="Griffiths G."/>
            <person name="Smith M."/>
            <person name="Glithero R."/>
            <person name="Howden P."/>
            <person name="Barker N."/>
            <person name="Lloyd C."/>
            <person name="Stevens C."/>
            <person name="Harley J."/>
            <person name="Holt K."/>
            <person name="Panagiotidis G."/>
            <person name="Lovell J."/>
            <person name="Beasley H."/>
            <person name="Henderson C."/>
            <person name="Gordon D."/>
            <person name="Auger K."/>
            <person name="Wright D."/>
            <person name="Collins J."/>
            <person name="Raisen C."/>
            <person name="Dyer L."/>
            <person name="Leung K."/>
            <person name="Robertson L."/>
            <person name="Ambridge K."/>
            <person name="Leongamornlert D."/>
            <person name="McGuire S."/>
            <person name="Gilderthorp R."/>
            <person name="Griffiths C."/>
            <person name="Manthravadi D."/>
            <person name="Nichol S."/>
            <person name="Barker G."/>
            <person name="Whitehead S."/>
            <person name="Kay M."/>
            <person name="Brown J."/>
            <person name="Murnane C."/>
            <person name="Gray E."/>
            <person name="Humphries M."/>
            <person name="Sycamore N."/>
            <person name="Barker D."/>
            <person name="Saunders D."/>
            <person name="Wallis J."/>
            <person name="Babbage A."/>
            <person name="Hammond S."/>
            <person name="Mashreghi-Mohammadi M."/>
            <person name="Barr L."/>
            <person name="Martin S."/>
            <person name="Wray P."/>
            <person name="Ellington A."/>
            <person name="Matthews N."/>
            <person name="Ellwood M."/>
            <person name="Woodmansey R."/>
            <person name="Clark G."/>
            <person name="Cooper J."/>
            <person name="Tromans A."/>
            <person name="Grafham D."/>
            <person name="Skuce C."/>
            <person name="Pandian R."/>
            <person name="Andrews R."/>
            <person name="Harrison E."/>
            <person name="Kimberley A."/>
            <person name="Garnett J."/>
            <person name="Fosker N."/>
            <person name="Hall R."/>
            <person name="Garner P."/>
            <person name="Kelly D."/>
            <person name="Bird C."/>
            <person name="Palmer S."/>
            <person name="Gehring I."/>
            <person name="Berger A."/>
            <person name="Dooley C.M."/>
            <person name="Ersan-Urun Z."/>
            <person name="Eser C."/>
            <person name="Geiger H."/>
            <person name="Geisler M."/>
            <person name="Karotki L."/>
            <person name="Kirn A."/>
            <person name="Konantz J."/>
            <person name="Konantz M."/>
            <person name="Oberlander M."/>
            <person name="Rudolph-Geiger S."/>
            <person name="Teucke M."/>
            <person name="Lanz C."/>
            <person name="Raddatz G."/>
            <person name="Osoegawa K."/>
            <person name="Zhu B."/>
            <person name="Rapp A."/>
            <person name="Widaa S."/>
            <person name="Langford C."/>
            <person name="Yang F."/>
            <person name="Schuster S.C."/>
            <person name="Carter N.P."/>
            <person name="Harrow J."/>
            <person name="Ning Z."/>
            <person name="Herrero J."/>
            <person name="Searle S.M."/>
            <person name="Enright A."/>
            <person name="Geisler R."/>
            <person name="Plasterk R.H."/>
            <person name="Lee C."/>
            <person name="Westerfield M."/>
            <person name="de Jong P.J."/>
            <person name="Zon L.I."/>
            <person name="Postlethwait J.H."/>
            <person name="Nusslein-Volhard C."/>
            <person name="Hubbard T.J."/>
            <person name="Roest Crollius H."/>
            <person name="Rogers J."/>
            <person name="Stemple D.L."/>
        </authorList>
    </citation>
    <scope>NUCLEOTIDE SEQUENCE [LARGE SCALE GENOMIC DNA]</scope>
    <source>
        <strain>Tuebingen</strain>
    </source>
</reference>
<reference key="3">
    <citation type="submission" date="2008-04" db="EMBL/GenBank/DDBJ databases">
        <authorList>
            <consortium name="NIH - Zebrafish Gene Collection (ZGC) project"/>
        </authorList>
    </citation>
    <scope>NUCLEOTIDE SEQUENCE [LARGE SCALE MRNA] (ISOFORM 1)</scope>
</reference>
<reference key="4">
    <citation type="journal article" date="2008" name="Genome Res.">
        <title>Large-scale screening for novel low-affinity extracellular protein interactions.</title>
        <authorList>
            <person name="Bushell K.M."/>
            <person name="Soellner C."/>
            <person name="Schuster-Boeckler B."/>
            <person name="Bateman A."/>
            <person name="Wright G.J."/>
        </authorList>
    </citation>
    <scope>NUCLEOTIDE SEQUENCE [LARGE SCALE MRNA] OF 5-478 (ISOFORM 1)</scope>
</reference>
<reference key="5">
    <citation type="journal article" date="2006" name="Curr. Biol.">
        <title>Canopy1, a novel regulator of FGF signaling around the midbrain-hindbrain boundary in zebrafish.</title>
        <authorList>
            <person name="Hirate Y."/>
            <person name="Okamoto H."/>
        </authorList>
    </citation>
    <scope>INTERACTION WITH CNPY1</scope>
</reference>
<feature type="signal peptide" evidence="2">
    <location>
        <begin position="1"/>
        <end position="26"/>
    </location>
</feature>
<feature type="chain" id="PRO_0000249202" description="Fibroblast growth factor receptor 1-A">
    <location>
        <begin position="27"/>
        <end position="810"/>
    </location>
</feature>
<feature type="topological domain" description="Extracellular" evidence="2">
    <location>
        <begin position="27"/>
        <end position="363"/>
    </location>
</feature>
<feature type="transmembrane region" description="Helical" evidence="2">
    <location>
        <begin position="364"/>
        <end position="384"/>
    </location>
</feature>
<feature type="topological domain" description="Cytoplasmic" evidence="2">
    <location>
        <begin position="385"/>
        <end position="810"/>
    </location>
</feature>
<feature type="domain" description="Ig-like C2-type 1">
    <location>
        <begin position="28"/>
        <end position="115"/>
    </location>
</feature>
<feature type="domain" description="Ig-like C2-type 2">
    <location>
        <begin position="147"/>
        <end position="235"/>
    </location>
</feature>
<feature type="domain" description="Ig-like C2-type 3">
    <location>
        <begin position="244"/>
        <end position="346"/>
    </location>
</feature>
<feature type="domain" description="Protein kinase" evidence="4">
    <location>
        <begin position="465"/>
        <end position="754"/>
    </location>
</feature>
<feature type="region of interest" description="Disordered" evidence="6">
    <location>
        <begin position="787"/>
        <end position="810"/>
    </location>
</feature>
<feature type="active site" description="Proton acceptor" evidence="4 5">
    <location>
        <position position="610"/>
    </location>
</feature>
<feature type="binding site" evidence="4">
    <location>
        <begin position="471"/>
        <end position="477"/>
    </location>
    <ligand>
        <name>ATP</name>
        <dbReference type="ChEBI" id="CHEBI:30616"/>
    </ligand>
</feature>
<feature type="binding site" evidence="4">
    <location>
        <position position="501"/>
    </location>
    <ligand>
        <name>ATP</name>
        <dbReference type="ChEBI" id="CHEBI:30616"/>
    </ligand>
</feature>
<feature type="binding site" evidence="4">
    <location>
        <begin position="549"/>
        <end position="551"/>
    </location>
    <ligand>
        <name>ATP</name>
        <dbReference type="ChEBI" id="CHEBI:30616"/>
    </ligand>
</feature>
<feature type="binding site" evidence="4">
    <location>
        <position position="555"/>
    </location>
    <ligand>
        <name>ATP</name>
        <dbReference type="ChEBI" id="CHEBI:30616"/>
    </ligand>
</feature>
<feature type="binding site" evidence="4">
    <location>
        <position position="614"/>
    </location>
    <ligand>
        <name>ATP</name>
        <dbReference type="ChEBI" id="CHEBI:30616"/>
    </ligand>
</feature>
<feature type="binding site" evidence="4">
    <location>
        <position position="628"/>
    </location>
    <ligand>
        <name>ATP</name>
        <dbReference type="ChEBI" id="CHEBI:30616"/>
    </ligand>
</feature>
<feature type="modified residue" description="Phosphotyrosine; by autocatalysis" evidence="1">
    <location>
        <position position="450"/>
    </location>
</feature>
<feature type="modified residue" description="Phosphotyrosine; by autocatalysis" evidence="1">
    <location>
        <position position="570"/>
    </location>
</feature>
<feature type="modified residue" description="Phosphotyrosine; by autocatalysis" evidence="1">
    <location>
        <position position="572"/>
    </location>
</feature>
<feature type="modified residue" description="Phosphotyrosine; by autocatalysis" evidence="1">
    <location>
        <position position="640"/>
    </location>
</feature>
<feature type="modified residue" description="Phosphotyrosine; by autocatalysis" evidence="1">
    <location>
        <position position="641"/>
    </location>
</feature>
<feature type="modified residue" description="Phosphotyrosine; by autocatalysis" evidence="1">
    <location>
        <position position="717"/>
    </location>
</feature>
<feature type="modified residue" description="Phosphotyrosine; by autocatalysis" evidence="1">
    <location>
        <position position="753"/>
    </location>
</feature>
<feature type="glycosylation site" description="N-linked (GlcNAc...) asparagine" evidence="2">
    <location>
        <position position="107"/>
    </location>
</feature>
<feature type="glycosylation site" description="N-linked (GlcNAc...) asparagine" evidence="2">
    <location>
        <position position="113"/>
    </location>
</feature>
<feature type="glycosylation site" description="N-linked (GlcNAc...) asparagine" evidence="2">
    <location>
        <position position="216"/>
    </location>
</feature>
<feature type="glycosylation site" description="N-linked (GlcNAc...) asparagine" evidence="2">
    <location>
        <position position="229"/>
    </location>
</feature>
<feature type="glycosylation site" description="N-linked (GlcNAc...) asparagine" evidence="2">
    <location>
        <position position="253"/>
    </location>
</feature>
<feature type="glycosylation site" description="N-linked (GlcNAc...) asparagine" evidence="2">
    <location>
        <position position="285"/>
    </location>
</feature>
<feature type="glycosylation site" description="N-linked (GlcNAc...) asparagine" evidence="2">
    <location>
        <position position="306"/>
    </location>
</feature>
<feature type="glycosylation site" description="N-linked (GlcNAc...) asparagine" evidence="2">
    <location>
        <position position="319"/>
    </location>
</feature>
<feature type="glycosylation site" description="N-linked (GlcNAc...) asparagine" evidence="2">
    <location>
        <position position="358"/>
    </location>
</feature>
<feature type="disulfide bond" evidence="3">
    <location>
        <begin position="53"/>
        <end position="99"/>
    </location>
</feature>
<feature type="disulfide bond" evidence="3">
    <location>
        <begin position="167"/>
        <end position="219"/>
    </location>
</feature>
<feature type="disulfide bond" evidence="3">
    <location>
        <begin position="266"/>
        <end position="330"/>
    </location>
</feature>
<feature type="splice variant" id="VSP_037674" description="In isoform 4." evidence="9">
    <location>
        <begin position="302"/>
        <end position="415"/>
    </location>
</feature>
<feature type="splice variant" id="VSP_037675" description="In isoform 3." evidence="9">
    <location>
        <begin position="302"/>
        <end position="349"/>
    </location>
</feature>
<feature type="splice variant" id="VSP_037676" description="In isoform 5." evidence="9">
    <original>TAGVNTTDKEMEVLQIRNVSLEDAGEYTCLAGNSIGHSHHSAWLTVYK</original>
    <variation>NSGVNSSDTQVLTLYNVTEEQSGEYICKVSNYIGQANQSAWLTVVKHLQ</variation>
    <location>
        <begin position="302"/>
        <end position="349"/>
    </location>
</feature>
<feature type="splice variant" id="VSP_037677" description="In isoform 2, isoform 3 and isoform 5." evidence="9">
    <location>
        <begin position="414"/>
        <end position="415"/>
    </location>
</feature>
<feature type="sequence conflict" description="In Ref. 1; AAK64494/AAO45658/AAO45659/AAO45660, 3; AAI62342 and 4; CAM60064." evidence="10" ref="1 3 4">
    <original>T</original>
    <variation>A</variation>
    <location>
        <position position="92"/>
    </location>
</feature>
<feature type="sequence conflict" description="In Ref. 4; CAM60064." evidence="10" ref="4">
    <original>V</original>
    <variation>I</variation>
    <location>
        <position position="351"/>
    </location>
</feature>
<keyword id="KW-0025">Alternative splicing</keyword>
<keyword id="KW-0067">ATP-binding</keyword>
<keyword id="KW-1003">Cell membrane</keyword>
<keyword id="KW-0963">Cytoplasm</keyword>
<keyword id="KW-0968">Cytoplasmic vesicle</keyword>
<keyword id="KW-1015">Disulfide bond</keyword>
<keyword id="KW-0325">Glycoprotein</keyword>
<keyword id="KW-0393">Immunoglobulin domain</keyword>
<keyword id="KW-0418">Kinase</keyword>
<keyword id="KW-0472">Membrane</keyword>
<keyword id="KW-0547">Nucleotide-binding</keyword>
<keyword id="KW-0539">Nucleus</keyword>
<keyword id="KW-0597">Phosphoprotein</keyword>
<keyword id="KW-0675">Receptor</keyword>
<keyword id="KW-1185">Reference proteome</keyword>
<keyword id="KW-0677">Repeat</keyword>
<keyword id="KW-0732">Signal</keyword>
<keyword id="KW-0808">Transferase</keyword>
<keyword id="KW-0812">Transmembrane</keyword>
<keyword id="KW-1133">Transmembrane helix</keyword>
<keyword id="KW-0829">Tyrosine-protein kinase</keyword>
<keyword id="KW-0832">Ubl conjugation</keyword>
<protein>
    <recommendedName>
        <fullName>Fibroblast growth factor receptor 1-A</fullName>
        <shortName>FGFR-1-A</shortName>
        <shortName>bFGF-R-1-A</shortName>
        <ecNumber>2.7.10.1</ecNumber>
    </recommendedName>
    <alternativeName>
        <fullName>Basic fibroblast growth factor receptor 1-A</fullName>
    </alternativeName>
</protein>
<sequence length="810" mass="91041">MKMMMIMKTTLLLISVLLTQALQSQGRPAIQDEAPAEPTSYTLDSGEKLELSCKAKEDTQKVTWTKDLVPLVDGEHTRLRNDQMEIEKVEPTDSGLYACFAQGLNSNHTEYFNISVTDEEDEVDSSSEEAKLSNDQNLPMAPVWAQPDKMEKKLHAVPASKTVKFRCQANGNPTPTLKWLKNGKEFKRDQRIGGFKVREHMWTIIMESVVPSDRGNYTCLVENRHGSINHTYQLDVVERSPHRPILQAGLPANRTAVVGSDVEFECKVFSDPQPHIQWLKHIEVNGSRYGPDGLPYVRALKTAGVNTTDKEMEVLQIRNVSLEDAGEYTCLAGNSIGHSHHSAWLTVYKAVPPTQLPNQTYLEVLIYCVGFFLICVMVGTAVLAKMHSSAKKSDFNSQLAVHKLAKSIPLRRQVTVSVDSSSSMHSGGMLVRPSRLSSSGSPMLSGVSEYELPQDPRWEVQRDRLVLGKPLGEGCFGQVMMAEAMGMDKEKPNRITKVAVKMLKSDATEKDLSDLISEMEMMKIIGKHKNIINLLGACTQDGPLYVIVEFAAKGNLREYLRVRRPPGMEYCYNPDQVPVENMSIKDLVSCAYQVARGMEYLASKKCIHRDLAARNVLVTEDNVMKIADFGLARDIHHIDYYKKTTNGRLPVKWMAPEALFDRIYTHQSDVWSFGVLLWEIFTLGGSPYPGVPVEELFKLLKEGHRMDRPSTCTHELYMMMRDCWHAVPSQRPTFKQLVEDLDRTLSMTSNQEYLDLSVSLDQFSPNFPDTRSSTCSSGEDSVFSHDAGADEPCLPKFPPHPNRGVAFKKR</sequence>
<dbReference type="EC" id="2.7.10.1"/>
<dbReference type="EMBL" id="AF389400">
    <property type="protein sequence ID" value="AAK64494.1"/>
    <property type="status" value="ALT_INIT"/>
    <property type="molecule type" value="mRNA"/>
</dbReference>
<dbReference type="EMBL" id="AY197498">
    <property type="protein sequence ID" value="AAO45658.1"/>
    <property type="status" value="ALT_INIT"/>
    <property type="molecule type" value="mRNA"/>
</dbReference>
<dbReference type="EMBL" id="AY197499">
    <property type="protein sequence ID" value="AAO45659.1"/>
    <property type="status" value="ALT_INIT"/>
    <property type="molecule type" value="mRNA"/>
</dbReference>
<dbReference type="EMBL" id="AY197500">
    <property type="protein sequence ID" value="AAO45660.1"/>
    <property type="status" value="ALT_INIT"/>
    <property type="molecule type" value="mRNA"/>
</dbReference>
<dbReference type="EMBL" id="AY197501">
    <property type="protein sequence ID" value="AAO45661.1"/>
    <property type="molecule type" value="mRNA"/>
</dbReference>
<dbReference type="EMBL" id="BX247873">
    <property type="protein sequence ID" value="CAK04365.2"/>
    <property type="molecule type" value="Genomic_DNA"/>
</dbReference>
<dbReference type="EMBL" id="CR376860">
    <property type="protein sequence ID" value="CAK04365.2"/>
    <property type="status" value="JOINED"/>
    <property type="molecule type" value="Genomic_DNA"/>
</dbReference>
<dbReference type="EMBL" id="BX247873">
    <property type="protein sequence ID" value="CAM13573.2"/>
    <property type="molecule type" value="Genomic_DNA"/>
</dbReference>
<dbReference type="EMBL" id="CR376860">
    <property type="protein sequence ID" value="CAM13573.2"/>
    <property type="status" value="JOINED"/>
    <property type="molecule type" value="Genomic_DNA"/>
</dbReference>
<dbReference type="EMBL" id="BX247873">
    <property type="protein sequence ID" value="CAM13574.1"/>
    <property type="molecule type" value="Genomic_DNA"/>
</dbReference>
<dbReference type="EMBL" id="CR376860">
    <property type="protein sequence ID" value="CAM13574.1"/>
    <property type="status" value="JOINED"/>
    <property type="molecule type" value="Genomic_DNA"/>
</dbReference>
<dbReference type="EMBL" id="CR376860">
    <property type="protein sequence ID" value="CAP19402.1"/>
    <property type="molecule type" value="Genomic_DNA"/>
</dbReference>
<dbReference type="EMBL" id="BX247873">
    <property type="protein sequence ID" value="CAP19402.1"/>
    <property type="status" value="JOINED"/>
    <property type="molecule type" value="Genomic_DNA"/>
</dbReference>
<dbReference type="EMBL" id="CR376860">
    <property type="protein sequence ID" value="CAP19403.1"/>
    <property type="molecule type" value="Genomic_DNA"/>
</dbReference>
<dbReference type="EMBL" id="BX247873">
    <property type="protein sequence ID" value="CAP19403.1"/>
    <property type="status" value="JOINED"/>
    <property type="molecule type" value="Genomic_DNA"/>
</dbReference>
<dbReference type="EMBL" id="CR376860">
    <property type="protein sequence ID" value="CAP19404.1"/>
    <property type="molecule type" value="Genomic_DNA"/>
</dbReference>
<dbReference type="EMBL" id="BX247873">
    <property type="protein sequence ID" value="CAP19404.1"/>
    <property type="status" value="JOINED"/>
    <property type="molecule type" value="Genomic_DNA"/>
</dbReference>
<dbReference type="EMBL" id="BC162342">
    <property type="protein sequence ID" value="AAI62342.1"/>
    <property type="status" value="ALT_INIT"/>
    <property type="molecule type" value="mRNA"/>
</dbReference>
<dbReference type="EMBL" id="CU458752">
    <property type="protein sequence ID" value="CAM60064.1"/>
    <property type="molecule type" value="mRNA"/>
</dbReference>
<dbReference type="RefSeq" id="NP_001296328.1">
    <molecule id="Q90Z00-2"/>
    <property type="nucleotide sequence ID" value="NM_001309399.1"/>
</dbReference>
<dbReference type="RefSeq" id="NP_001296329.1">
    <molecule id="Q90Z00-4"/>
    <property type="nucleotide sequence ID" value="NM_001309400.1"/>
</dbReference>
<dbReference type="RefSeq" id="NP_694494.2">
    <molecule id="Q90Z00-1"/>
    <property type="nucleotide sequence ID" value="NM_152962.3"/>
</dbReference>
<dbReference type="RefSeq" id="XP_009302579.1">
    <molecule id="Q90Z00-5"/>
    <property type="nucleotide sequence ID" value="XM_009304304.4"/>
</dbReference>
<dbReference type="SMR" id="Q90Z00"/>
<dbReference type="FunCoup" id="Q90Z00">
    <property type="interactions" value="1360"/>
</dbReference>
<dbReference type="IntAct" id="Q90Z00">
    <property type="interactions" value="2"/>
</dbReference>
<dbReference type="MINT" id="Q90Z00"/>
<dbReference type="STRING" id="7955.ENSDARP00000013742"/>
<dbReference type="GlyCosmos" id="Q90Z00">
    <property type="glycosylation" value="9 sites, No reported glycans"/>
</dbReference>
<dbReference type="PaxDb" id="7955-ENSDARP00000069260"/>
<dbReference type="GeneID" id="30705"/>
<dbReference type="KEGG" id="dre:30705"/>
<dbReference type="AGR" id="ZFIN:ZDB-GENE-980526-255"/>
<dbReference type="CTD" id="30705"/>
<dbReference type="ZFIN" id="ZDB-GENE-980526-255">
    <property type="gene designation" value="fgfr1a"/>
</dbReference>
<dbReference type="eggNOG" id="KOG0200">
    <property type="taxonomic scope" value="Eukaryota"/>
</dbReference>
<dbReference type="HOGENOM" id="CLU_000288_74_3_1"/>
<dbReference type="InParanoid" id="Q90Z00"/>
<dbReference type="OMA" id="WIFVPCK"/>
<dbReference type="OrthoDB" id="5984265at2759"/>
<dbReference type="PhylomeDB" id="Q90Z00"/>
<dbReference type="TreeFam" id="TF316307"/>
<dbReference type="Reactome" id="R-DRE-1257604">
    <property type="pathway name" value="PIP3 activates AKT signaling"/>
</dbReference>
<dbReference type="Reactome" id="R-DRE-190370">
    <property type="pathway name" value="FGFR1b ligand binding and activation"/>
</dbReference>
<dbReference type="Reactome" id="R-DRE-190373">
    <property type="pathway name" value="FGFR1c ligand binding and activation"/>
</dbReference>
<dbReference type="Reactome" id="R-DRE-190374">
    <property type="pathway name" value="FGFR1c and Klotho ligand binding and activation"/>
</dbReference>
<dbReference type="Reactome" id="R-DRE-5654219">
    <property type="pathway name" value="Phospholipase C-mediated cascade: FGFR1"/>
</dbReference>
<dbReference type="Reactome" id="R-DRE-5654687">
    <property type="pathway name" value="Downstream signaling of activated FGFR1"/>
</dbReference>
<dbReference type="Reactome" id="R-DRE-5654688">
    <property type="pathway name" value="SHC-mediated cascade:FGFR1"/>
</dbReference>
<dbReference type="Reactome" id="R-DRE-5654689">
    <property type="pathway name" value="PI-3K cascade:FGFR1"/>
</dbReference>
<dbReference type="Reactome" id="R-DRE-5654693">
    <property type="pathway name" value="FRS-mediated FGFR1 signaling"/>
</dbReference>
<dbReference type="Reactome" id="R-DRE-5654726">
    <property type="pathway name" value="Negative regulation of FGFR1 signaling"/>
</dbReference>
<dbReference type="Reactome" id="R-DRE-5673001">
    <property type="pathway name" value="RAF/MAP kinase cascade"/>
</dbReference>
<dbReference type="Reactome" id="R-DRE-6811558">
    <property type="pathway name" value="PI5P, PP2A and IER3 Regulate PI3K/AKT Signaling"/>
</dbReference>
<dbReference type="SignaLink" id="Q90Z00"/>
<dbReference type="PRO" id="PR:Q90Z00"/>
<dbReference type="Proteomes" id="UP000000437">
    <property type="component" value="Chromosome 8"/>
</dbReference>
<dbReference type="Bgee" id="ENSDARG00000011027">
    <property type="expression patterns" value="Expressed in tail bud paraxial mesoderm and 108 other cell types or tissues"/>
</dbReference>
<dbReference type="ExpressionAtlas" id="Q90Z00">
    <property type="expression patterns" value="baseline"/>
</dbReference>
<dbReference type="GO" id="GO:0031410">
    <property type="term" value="C:cytoplasmic vesicle"/>
    <property type="evidence" value="ECO:0007669"/>
    <property type="project" value="UniProtKB-KW"/>
</dbReference>
<dbReference type="GO" id="GO:0005829">
    <property type="term" value="C:cytosol"/>
    <property type="evidence" value="ECO:0007669"/>
    <property type="project" value="UniProtKB-SubCell"/>
</dbReference>
<dbReference type="GO" id="GO:0005634">
    <property type="term" value="C:nucleus"/>
    <property type="evidence" value="ECO:0007669"/>
    <property type="project" value="UniProtKB-SubCell"/>
</dbReference>
<dbReference type="GO" id="GO:0005886">
    <property type="term" value="C:plasma membrane"/>
    <property type="evidence" value="ECO:0000250"/>
    <property type="project" value="UniProtKB"/>
</dbReference>
<dbReference type="GO" id="GO:0043235">
    <property type="term" value="C:receptor complex"/>
    <property type="evidence" value="ECO:0000318"/>
    <property type="project" value="GO_Central"/>
</dbReference>
<dbReference type="GO" id="GO:0005524">
    <property type="term" value="F:ATP binding"/>
    <property type="evidence" value="ECO:0007669"/>
    <property type="project" value="UniProtKB-KW"/>
</dbReference>
<dbReference type="GO" id="GO:0017134">
    <property type="term" value="F:fibroblast growth factor binding"/>
    <property type="evidence" value="ECO:0000250"/>
    <property type="project" value="UniProtKB"/>
</dbReference>
<dbReference type="GO" id="GO:0005007">
    <property type="term" value="F:fibroblast growth factor receptor activity"/>
    <property type="evidence" value="ECO:0000314"/>
    <property type="project" value="ZFIN"/>
</dbReference>
<dbReference type="GO" id="GO:0008201">
    <property type="term" value="F:heparin binding"/>
    <property type="evidence" value="ECO:0000250"/>
    <property type="project" value="UniProtKB"/>
</dbReference>
<dbReference type="GO" id="GO:0060249">
    <property type="term" value="P:anatomical structure homeostasis"/>
    <property type="evidence" value="ECO:0000315"/>
    <property type="project" value="ZFIN"/>
</dbReference>
<dbReference type="GO" id="GO:0048738">
    <property type="term" value="P:cardiac muscle tissue development"/>
    <property type="evidence" value="ECO:0000315"/>
    <property type="project" value="ZFIN"/>
</dbReference>
<dbReference type="GO" id="GO:0051216">
    <property type="term" value="P:cartilage development"/>
    <property type="evidence" value="ECO:0000316"/>
    <property type="project" value="ZFIN"/>
</dbReference>
<dbReference type="GO" id="GO:0021535">
    <property type="term" value="P:cell migration in hindbrain"/>
    <property type="evidence" value="ECO:0000315"/>
    <property type="project" value="ZFIN"/>
</dbReference>
<dbReference type="GO" id="GO:0009953">
    <property type="term" value="P:dorsal/ventral pattern formation"/>
    <property type="evidence" value="ECO:0000315"/>
    <property type="project" value="ZFIN"/>
</dbReference>
<dbReference type="GO" id="GO:0008543">
    <property type="term" value="P:fibroblast growth factor receptor signaling pathway"/>
    <property type="evidence" value="ECO:0000314"/>
    <property type="project" value="ZFIN"/>
</dbReference>
<dbReference type="GO" id="GO:0031101">
    <property type="term" value="P:fin regeneration"/>
    <property type="evidence" value="ECO:0000315"/>
    <property type="project" value="ZFIN"/>
</dbReference>
<dbReference type="GO" id="GO:0001889">
    <property type="term" value="P:liver development"/>
    <property type="evidence" value="ECO:0000315"/>
    <property type="project" value="ZFIN"/>
</dbReference>
<dbReference type="GO" id="GO:0007498">
    <property type="term" value="P:mesoderm development"/>
    <property type="evidence" value="ECO:0000316"/>
    <property type="project" value="ZFIN"/>
</dbReference>
<dbReference type="GO" id="GO:0042664">
    <property type="term" value="P:negative regulation of endodermal cell fate specification"/>
    <property type="evidence" value="ECO:0000316"/>
    <property type="project" value="ZFIN"/>
</dbReference>
<dbReference type="GO" id="GO:0021628">
    <property type="term" value="P:olfactory nerve formation"/>
    <property type="evidence" value="ECO:0000315"/>
    <property type="project" value="ZFIN"/>
</dbReference>
<dbReference type="GO" id="GO:0071699">
    <property type="term" value="P:olfactory placode morphogenesis"/>
    <property type="evidence" value="ECO:0000315"/>
    <property type="project" value="ZFIN"/>
</dbReference>
<dbReference type="GO" id="GO:0033339">
    <property type="term" value="P:pectoral fin development"/>
    <property type="evidence" value="ECO:0000316"/>
    <property type="project" value="ZFIN"/>
</dbReference>
<dbReference type="GO" id="GO:0045597">
    <property type="term" value="P:positive regulation of cell differentiation"/>
    <property type="evidence" value="ECO:0000318"/>
    <property type="project" value="GO_Central"/>
</dbReference>
<dbReference type="GO" id="GO:0008284">
    <property type="term" value="P:positive regulation of cell population proliferation"/>
    <property type="evidence" value="ECO:0000318"/>
    <property type="project" value="GO_Central"/>
</dbReference>
<dbReference type="GO" id="GO:0043410">
    <property type="term" value="P:positive regulation of MAPK cascade"/>
    <property type="evidence" value="ECO:0000318"/>
    <property type="project" value="GO_Central"/>
</dbReference>
<dbReference type="GO" id="GO:0036342">
    <property type="term" value="P:post-anal tail morphogenesis"/>
    <property type="evidence" value="ECO:0000316"/>
    <property type="project" value="ZFIN"/>
</dbReference>
<dbReference type="GO" id="GO:0048916">
    <property type="term" value="P:posterior lateral line development"/>
    <property type="evidence" value="ECO:0000315"/>
    <property type="project" value="ZFIN"/>
</dbReference>
<dbReference type="GO" id="GO:0045471">
    <property type="term" value="P:response to ethanol"/>
    <property type="evidence" value="ECO:0000314"/>
    <property type="project" value="ZFIN"/>
</dbReference>
<dbReference type="GO" id="GO:0043589">
    <property type="term" value="P:skin morphogenesis"/>
    <property type="evidence" value="ECO:0000315"/>
    <property type="project" value="ZFIN"/>
</dbReference>
<dbReference type="CDD" id="cd05098">
    <property type="entry name" value="PTKc_FGFR1"/>
    <property type="match status" value="1"/>
</dbReference>
<dbReference type="FunFam" id="1.10.510.10:FF:000007">
    <property type="entry name" value="Fibroblast growth factor receptor"/>
    <property type="match status" value="1"/>
</dbReference>
<dbReference type="FunFam" id="2.60.40.10:FF:000016">
    <property type="entry name" value="Fibroblast growth factor receptor"/>
    <property type="match status" value="1"/>
</dbReference>
<dbReference type="FunFam" id="2.60.40.10:FF:000020">
    <property type="entry name" value="Fibroblast growth factor receptor"/>
    <property type="match status" value="1"/>
</dbReference>
<dbReference type="FunFam" id="2.60.40.10:FF:000252">
    <property type="entry name" value="Fibroblast growth factor receptor"/>
    <property type="match status" value="1"/>
</dbReference>
<dbReference type="FunFam" id="3.30.200.20:FF:000011">
    <property type="entry name" value="Fibroblast growth factor receptor"/>
    <property type="match status" value="1"/>
</dbReference>
<dbReference type="Gene3D" id="2.60.40.10">
    <property type="entry name" value="Immunoglobulins"/>
    <property type="match status" value="3"/>
</dbReference>
<dbReference type="Gene3D" id="3.30.200.20">
    <property type="entry name" value="Phosphorylase Kinase, domain 1"/>
    <property type="match status" value="1"/>
</dbReference>
<dbReference type="Gene3D" id="1.10.510.10">
    <property type="entry name" value="Transferase(Phosphotransferase) domain 1"/>
    <property type="match status" value="1"/>
</dbReference>
<dbReference type="InterPro" id="IPR028174">
    <property type="entry name" value="FGF_rcpt_1"/>
</dbReference>
<dbReference type="InterPro" id="IPR016248">
    <property type="entry name" value="FGF_rcpt_fam"/>
</dbReference>
<dbReference type="InterPro" id="IPR007110">
    <property type="entry name" value="Ig-like_dom"/>
</dbReference>
<dbReference type="InterPro" id="IPR036179">
    <property type="entry name" value="Ig-like_dom_sf"/>
</dbReference>
<dbReference type="InterPro" id="IPR013783">
    <property type="entry name" value="Ig-like_fold"/>
</dbReference>
<dbReference type="InterPro" id="IPR013098">
    <property type="entry name" value="Ig_I-set"/>
</dbReference>
<dbReference type="InterPro" id="IPR003599">
    <property type="entry name" value="Ig_sub"/>
</dbReference>
<dbReference type="InterPro" id="IPR003598">
    <property type="entry name" value="Ig_sub2"/>
</dbReference>
<dbReference type="InterPro" id="IPR011009">
    <property type="entry name" value="Kinase-like_dom_sf"/>
</dbReference>
<dbReference type="InterPro" id="IPR000719">
    <property type="entry name" value="Prot_kinase_dom"/>
</dbReference>
<dbReference type="InterPro" id="IPR017441">
    <property type="entry name" value="Protein_kinase_ATP_BS"/>
</dbReference>
<dbReference type="InterPro" id="IPR050122">
    <property type="entry name" value="RTK"/>
</dbReference>
<dbReference type="InterPro" id="IPR001245">
    <property type="entry name" value="Ser-Thr/Tyr_kinase_cat_dom"/>
</dbReference>
<dbReference type="InterPro" id="IPR008266">
    <property type="entry name" value="Tyr_kinase_AS"/>
</dbReference>
<dbReference type="InterPro" id="IPR020635">
    <property type="entry name" value="Tyr_kinase_cat_dom"/>
</dbReference>
<dbReference type="PANTHER" id="PTHR24416:SF131">
    <property type="entry name" value="FIBROBLAST GROWTH FACTOR RECEPTOR 1"/>
    <property type="match status" value="1"/>
</dbReference>
<dbReference type="PANTHER" id="PTHR24416">
    <property type="entry name" value="TYROSINE-PROTEIN KINASE RECEPTOR"/>
    <property type="match status" value="1"/>
</dbReference>
<dbReference type="Pfam" id="PF07679">
    <property type="entry name" value="I-set"/>
    <property type="match status" value="2"/>
</dbReference>
<dbReference type="Pfam" id="PF13927">
    <property type="entry name" value="Ig_3"/>
    <property type="match status" value="1"/>
</dbReference>
<dbReference type="Pfam" id="PF07714">
    <property type="entry name" value="PK_Tyr_Ser-Thr"/>
    <property type="match status" value="1"/>
</dbReference>
<dbReference type="PIRSF" id="PIRSF000628">
    <property type="entry name" value="FGFR"/>
    <property type="match status" value="1"/>
</dbReference>
<dbReference type="PRINTS" id="PR00109">
    <property type="entry name" value="TYRKINASE"/>
</dbReference>
<dbReference type="SMART" id="SM00409">
    <property type="entry name" value="IG"/>
    <property type="match status" value="3"/>
</dbReference>
<dbReference type="SMART" id="SM00408">
    <property type="entry name" value="IGc2"/>
    <property type="match status" value="3"/>
</dbReference>
<dbReference type="SMART" id="SM00219">
    <property type="entry name" value="TyrKc"/>
    <property type="match status" value="1"/>
</dbReference>
<dbReference type="SUPFAM" id="SSF48726">
    <property type="entry name" value="Immunoglobulin"/>
    <property type="match status" value="3"/>
</dbReference>
<dbReference type="SUPFAM" id="SSF56112">
    <property type="entry name" value="Protein kinase-like (PK-like)"/>
    <property type="match status" value="1"/>
</dbReference>
<dbReference type="PROSITE" id="PS50835">
    <property type="entry name" value="IG_LIKE"/>
    <property type="match status" value="3"/>
</dbReference>
<dbReference type="PROSITE" id="PS00107">
    <property type="entry name" value="PROTEIN_KINASE_ATP"/>
    <property type="match status" value="1"/>
</dbReference>
<dbReference type="PROSITE" id="PS50011">
    <property type="entry name" value="PROTEIN_KINASE_DOM"/>
    <property type="match status" value="1"/>
</dbReference>
<dbReference type="PROSITE" id="PS00109">
    <property type="entry name" value="PROTEIN_KINASE_TYR"/>
    <property type="match status" value="1"/>
</dbReference>
<organism>
    <name type="scientific">Danio rerio</name>
    <name type="common">Zebrafish</name>
    <name type="synonym">Brachydanio rerio</name>
    <dbReference type="NCBI Taxonomy" id="7955"/>
    <lineage>
        <taxon>Eukaryota</taxon>
        <taxon>Metazoa</taxon>
        <taxon>Chordata</taxon>
        <taxon>Craniata</taxon>
        <taxon>Vertebrata</taxon>
        <taxon>Euteleostomi</taxon>
        <taxon>Actinopterygii</taxon>
        <taxon>Neopterygii</taxon>
        <taxon>Teleostei</taxon>
        <taxon>Ostariophysi</taxon>
        <taxon>Cypriniformes</taxon>
        <taxon>Danionidae</taxon>
        <taxon>Danioninae</taxon>
        <taxon>Danio</taxon>
    </lineage>
</organism>
<accession>Q90Z00</accession>
<accession>A2BEU6</accession>
<accession>A2BEU7</accession>
<accession>A4JYD6</accession>
<accession>B3DGB8</accession>
<accession>Q1LY25</accession>
<accession>Q800Y8</accession>
<accession>Q800Y9</accession>
<accession>Q800Z0</accession>
<accession>Q800Z1</accession>
<evidence type="ECO:0000250" key="1"/>
<evidence type="ECO:0000255" key="2"/>
<evidence type="ECO:0000255" key="3">
    <source>
        <dbReference type="PROSITE-ProRule" id="PRU00114"/>
    </source>
</evidence>
<evidence type="ECO:0000255" key="4">
    <source>
        <dbReference type="PROSITE-ProRule" id="PRU00159"/>
    </source>
</evidence>
<evidence type="ECO:0000255" key="5">
    <source>
        <dbReference type="PROSITE-ProRule" id="PRU10028"/>
    </source>
</evidence>
<evidence type="ECO:0000256" key="6">
    <source>
        <dbReference type="SAM" id="MobiDB-lite"/>
    </source>
</evidence>
<evidence type="ECO:0000269" key="7">
    <source>
    </source>
</evidence>
<evidence type="ECO:0000269" key="8">
    <source>
    </source>
</evidence>
<evidence type="ECO:0000303" key="9">
    <source>
    </source>
</evidence>
<evidence type="ECO:0000305" key="10"/>
<name>FGR1A_DANRE</name>